<feature type="chain" id="PRO_0000152974" description="GTP 3',8-cyclase 2">
    <location>
        <begin position="1"/>
        <end position="360"/>
    </location>
</feature>
<feature type="domain" description="Radical SAM core" evidence="2">
    <location>
        <begin position="33"/>
        <end position="259"/>
    </location>
</feature>
<feature type="binding site" evidence="1">
    <location>
        <position position="42"/>
    </location>
    <ligand>
        <name>GTP</name>
        <dbReference type="ChEBI" id="CHEBI:37565"/>
    </ligand>
</feature>
<feature type="binding site" evidence="1">
    <location>
        <position position="49"/>
    </location>
    <ligand>
        <name>[4Fe-4S] cluster</name>
        <dbReference type="ChEBI" id="CHEBI:49883"/>
        <label>1</label>
        <note>4Fe-4S-S-AdoMet</note>
    </ligand>
</feature>
<feature type="binding site" evidence="1">
    <location>
        <position position="53"/>
    </location>
    <ligand>
        <name>[4Fe-4S] cluster</name>
        <dbReference type="ChEBI" id="CHEBI:49883"/>
        <label>1</label>
        <note>4Fe-4S-S-AdoMet</note>
    </ligand>
</feature>
<feature type="binding site" evidence="1">
    <location>
        <position position="55"/>
    </location>
    <ligand>
        <name>S-adenosyl-L-methionine</name>
        <dbReference type="ChEBI" id="CHEBI:59789"/>
    </ligand>
</feature>
<feature type="binding site" evidence="1">
    <location>
        <position position="56"/>
    </location>
    <ligand>
        <name>[4Fe-4S] cluster</name>
        <dbReference type="ChEBI" id="CHEBI:49883"/>
        <label>1</label>
        <note>4Fe-4S-S-AdoMet</note>
    </ligand>
</feature>
<feature type="binding site" evidence="1">
    <location>
        <position position="93"/>
    </location>
    <ligand>
        <name>GTP</name>
        <dbReference type="ChEBI" id="CHEBI:37565"/>
    </ligand>
</feature>
<feature type="binding site" evidence="1">
    <location>
        <position position="97"/>
    </location>
    <ligand>
        <name>S-adenosyl-L-methionine</name>
        <dbReference type="ChEBI" id="CHEBI:59789"/>
    </ligand>
</feature>
<feature type="binding site" evidence="1">
    <location>
        <position position="124"/>
    </location>
    <ligand>
        <name>GTP</name>
        <dbReference type="ChEBI" id="CHEBI:37565"/>
    </ligand>
</feature>
<feature type="binding site" evidence="1">
    <location>
        <position position="148"/>
    </location>
    <ligand>
        <name>S-adenosyl-L-methionine</name>
        <dbReference type="ChEBI" id="CHEBI:59789"/>
    </ligand>
</feature>
<feature type="binding site" evidence="1">
    <location>
        <position position="185"/>
    </location>
    <ligand>
        <name>GTP</name>
        <dbReference type="ChEBI" id="CHEBI:37565"/>
    </ligand>
</feature>
<feature type="binding site" evidence="1">
    <location>
        <position position="219"/>
    </location>
    <ligand>
        <name>S-adenosyl-L-methionine</name>
        <dbReference type="ChEBI" id="CHEBI:59789"/>
    </ligand>
</feature>
<feature type="binding site" evidence="1">
    <location>
        <position position="287"/>
    </location>
    <ligand>
        <name>[4Fe-4S] cluster</name>
        <dbReference type="ChEBI" id="CHEBI:49883"/>
        <label>2</label>
        <note>4Fe-4S-substrate</note>
    </ligand>
</feature>
<feature type="binding site" evidence="1">
    <location>
        <position position="290"/>
    </location>
    <ligand>
        <name>[4Fe-4S] cluster</name>
        <dbReference type="ChEBI" id="CHEBI:49883"/>
        <label>2</label>
        <note>4Fe-4S-substrate</note>
    </ligand>
</feature>
<feature type="binding site" evidence="1">
    <location>
        <begin position="292"/>
        <end position="294"/>
    </location>
    <ligand>
        <name>GTP</name>
        <dbReference type="ChEBI" id="CHEBI:37565"/>
    </ligand>
</feature>
<feature type="binding site" evidence="1">
    <location>
        <position position="304"/>
    </location>
    <ligand>
        <name>[4Fe-4S] cluster</name>
        <dbReference type="ChEBI" id="CHEBI:49883"/>
        <label>2</label>
        <note>4Fe-4S-substrate</note>
    </ligand>
</feature>
<sequence>MTLTALGMPALRSRTNGIADPRVVPTTGPLVDTFGRVANDLRVSLTDRCNLRCSYCMPERGLRWLPGEQLLRPDELARLIHIAVTRLGVTSVRFTGGEPLLAHHLDEVVAATARLRPRPEISLTTNGVGLARRAGALAEAGLDRVNVSLDSIDRAHFAAITRRDRLAHVLAGLAAAKAAGLTPVKVNAVLDPTTGREDVVDLLRFCLERGYQLRVIEQMPLDAGHSWRRNIALSADDVLAALRPHFRLRPDPAPRGSAPAELWLVDAGPNTPRGRFGVIASVSHAFCSTCDRTRLTADGQIRSCLFSTEETDLRRLLRGGADDDAIEAAWRAAMWSKPAGHGINAPDFIQPDRPMSAIGG</sequence>
<proteinExistence type="inferred from homology"/>
<protein>
    <recommendedName>
        <fullName evidence="1">GTP 3',8-cyclase 2</fullName>
        <ecNumber evidence="1">4.1.99.22</ecNumber>
    </recommendedName>
    <alternativeName>
        <fullName evidence="1">Molybdenum cofactor biosynthesis protein A 2</fullName>
    </alternativeName>
</protein>
<comment type="function">
    <text evidence="1">Catalyzes the cyclization of GTP to (8S)-3',8-cyclo-7,8-dihydroguanosine 5'-triphosphate.</text>
</comment>
<comment type="catalytic activity">
    <reaction evidence="1">
        <text>GTP + AH2 + S-adenosyl-L-methionine = (8S)-3',8-cyclo-7,8-dihydroguanosine 5'-triphosphate + 5'-deoxyadenosine + L-methionine + A + H(+)</text>
        <dbReference type="Rhea" id="RHEA:49576"/>
        <dbReference type="ChEBI" id="CHEBI:13193"/>
        <dbReference type="ChEBI" id="CHEBI:15378"/>
        <dbReference type="ChEBI" id="CHEBI:17319"/>
        <dbReference type="ChEBI" id="CHEBI:17499"/>
        <dbReference type="ChEBI" id="CHEBI:37565"/>
        <dbReference type="ChEBI" id="CHEBI:57844"/>
        <dbReference type="ChEBI" id="CHEBI:59789"/>
        <dbReference type="ChEBI" id="CHEBI:131766"/>
        <dbReference type="EC" id="4.1.99.22"/>
    </reaction>
</comment>
<comment type="cofactor">
    <cofactor evidence="1">
        <name>[4Fe-4S] cluster</name>
        <dbReference type="ChEBI" id="CHEBI:49883"/>
    </cofactor>
    <text evidence="1">Binds 2 [4Fe-4S] clusters. Binds 1 [4Fe-4S] cluster coordinated with 3 cysteines and an exchangeable S-adenosyl-L-methionine and 1 [4Fe-4S] cluster coordinated with 3 cysteines and the GTP-derived substrate.</text>
</comment>
<comment type="pathway">
    <text evidence="1">Cofactor biosynthesis; molybdopterin biosynthesis.</text>
</comment>
<comment type="subunit">
    <text evidence="1">Monomer and homodimer.</text>
</comment>
<comment type="similarity">
    <text evidence="1">Belongs to the radical SAM superfamily. MoaA family.</text>
</comment>
<organism>
    <name type="scientific">Mycobacterium bovis (strain ATCC BAA-935 / AF2122/97)</name>
    <dbReference type="NCBI Taxonomy" id="233413"/>
    <lineage>
        <taxon>Bacteria</taxon>
        <taxon>Bacillati</taxon>
        <taxon>Actinomycetota</taxon>
        <taxon>Actinomycetes</taxon>
        <taxon>Mycobacteriales</taxon>
        <taxon>Mycobacteriaceae</taxon>
        <taxon>Mycobacterium</taxon>
        <taxon>Mycobacterium tuberculosis complex</taxon>
    </lineage>
</organism>
<gene>
    <name evidence="1" type="primary">moaA2</name>
    <name type="ordered locus">BQ2027_MB0893C</name>
</gene>
<evidence type="ECO:0000255" key="1">
    <source>
        <dbReference type="HAMAP-Rule" id="MF_01225"/>
    </source>
</evidence>
<evidence type="ECO:0000255" key="2">
    <source>
        <dbReference type="PROSITE-ProRule" id="PRU01266"/>
    </source>
</evidence>
<dbReference type="EC" id="4.1.99.22" evidence="1"/>
<dbReference type="EMBL" id="LT708304">
    <property type="protein sequence ID" value="SIT99491.1"/>
    <property type="molecule type" value="Genomic_DNA"/>
</dbReference>
<dbReference type="RefSeq" id="NP_854550.1">
    <property type="nucleotide sequence ID" value="NC_002945.3"/>
</dbReference>
<dbReference type="SMR" id="P65385"/>
<dbReference type="KEGG" id="mbo:BQ2027_MB0893C"/>
<dbReference type="PATRIC" id="fig|233413.5.peg.971"/>
<dbReference type="UniPathway" id="UPA00344"/>
<dbReference type="Proteomes" id="UP000001419">
    <property type="component" value="Chromosome"/>
</dbReference>
<dbReference type="GO" id="GO:0051539">
    <property type="term" value="F:4 iron, 4 sulfur cluster binding"/>
    <property type="evidence" value="ECO:0007669"/>
    <property type="project" value="UniProtKB-UniRule"/>
</dbReference>
<dbReference type="GO" id="GO:0061799">
    <property type="term" value="F:cyclic pyranopterin monophosphate synthase activity"/>
    <property type="evidence" value="ECO:0007669"/>
    <property type="project" value="TreeGrafter"/>
</dbReference>
<dbReference type="GO" id="GO:0061798">
    <property type="term" value="F:GTP 3',8'-cyclase activity"/>
    <property type="evidence" value="ECO:0007669"/>
    <property type="project" value="UniProtKB-UniRule"/>
</dbReference>
<dbReference type="GO" id="GO:0005525">
    <property type="term" value="F:GTP binding"/>
    <property type="evidence" value="ECO:0007669"/>
    <property type="project" value="UniProtKB-UniRule"/>
</dbReference>
<dbReference type="GO" id="GO:0046872">
    <property type="term" value="F:metal ion binding"/>
    <property type="evidence" value="ECO:0007669"/>
    <property type="project" value="UniProtKB-KW"/>
</dbReference>
<dbReference type="GO" id="GO:1904047">
    <property type="term" value="F:S-adenosyl-L-methionine binding"/>
    <property type="evidence" value="ECO:0007669"/>
    <property type="project" value="UniProtKB-UniRule"/>
</dbReference>
<dbReference type="GO" id="GO:0006777">
    <property type="term" value="P:Mo-molybdopterin cofactor biosynthetic process"/>
    <property type="evidence" value="ECO:0007669"/>
    <property type="project" value="UniProtKB-UniRule"/>
</dbReference>
<dbReference type="CDD" id="cd01335">
    <property type="entry name" value="Radical_SAM"/>
    <property type="match status" value="1"/>
</dbReference>
<dbReference type="CDD" id="cd21117">
    <property type="entry name" value="Twitch_MoaA"/>
    <property type="match status" value="1"/>
</dbReference>
<dbReference type="Gene3D" id="3.20.20.70">
    <property type="entry name" value="Aldolase class I"/>
    <property type="match status" value="1"/>
</dbReference>
<dbReference type="HAMAP" id="MF_01225_B">
    <property type="entry name" value="MoaA_B"/>
    <property type="match status" value="1"/>
</dbReference>
<dbReference type="InterPro" id="IPR013785">
    <property type="entry name" value="Aldolase_TIM"/>
</dbReference>
<dbReference type="InterPro" id="IPR006638">
    <property type="entry name" value="Elp3/MiaA/NifB-like_rSAM"/>
</dbReference>
<dbReference type="InterPro" id="IPR013483">
    <property type="entry name" value="MoaA"/>
</dbReference>
<dbReference type="InterPro" id="IPR000385">
    <property type="entry name" value="MoaA_NifB_PqqE_Fe-S-bd_CS"/>
</dbReference>
<dbReference type="InterPro" id="IPR010505">
    <property type="entry name" value="MoaA_twitch"/>
</dbReference>
<dbReference type="InterPro" id="IPR050105">
    <property type="entry name" value="MoCo_biosynth_MoaA/MoaC"/>
</dbReference>
<dbReference type="InterPro" id="IPR007197">
    <property type="entry name" value="rSAM"/>
</dbReference>
<dbReference type="NCBIfam" id="TIGR02666">
    <property type="entry name" value="moaA"/>
    <property type="match status" value="1"/>
</dbReference>
<dbReference type="PANTHER" id="PTHR22960:SF0">
    <property type="entry name" value="MOLYBDENUM COFACTOR BIOSYNTHESIS PROTEIN 1"/>
    <property type="match status" value="1"/>
</dbReference>
<dbReference type="PANTHER" id="PTHR22960">
    <property type="entry name" value="MOLYBDOPTERIN COFACTOR SYNTHESIS PROTEIN A"/>
    <property type="match status" value="1"/>
</dbReference>
<dbReference type="Pfam" id="PF06463">
    <property type="entry name" value="Mob_synth_C"/>
    <property type="match status" value="1"/>
</dbReference>
<dbReference type="Pfam" id="PF04055">
    <property type="entry name" value="Radical_SAM"/>
    <property type="match status" value="1"/>
</dbReference>
<dbReference type="SFLD" id="SFLDG01383">
    <property type="entry name" value="cyclic_pyranopterin_phosphate"/>
    <property type="match status" value="1"/>
</dbReference>
<dbReference type="SFLD" id="SFLDG01072">
    <property type="entry name" value="dehydrogenase_like"/>
    <property type="match status" value="1"/>
</dbReference>
<dbReference type="SMART" id="SM00729">
    <property type="entry name" value="Elp3"/>
    <property type="match status" value="1"/>
</dbReference>
<dbReference type="SUPFAM" id="SSF102114">
    <property type="entry name" value="Radical SAM enzymes"/>
    <property type="match status" value="1"/>
</dbReference>
<dbReference type="PROSITE" id="PS01305">
    <property type="entry name" value="MOAA_NIFB_PQQE"/>
    <property type="match status" value="1"/>
</dbReference>
<dbReference type="PROSITE" id="PS51918">
    <property type="entry name" value="RADICAL_SAM"/>
    <property type="match status" value="1"/>
</dbReference>
<keyword id="KW-0004">4Fe-4S</keyword>
<keyword id="KW-0342">GTP-binding</keyword>
<keyword id="KW-0408">Iron</keyword>
<keyword id="KW-0411">Iron-sulfur</keyword>
<keyword id="KW-0456">Lyase</keyword>
<keyword id="KW-0479">Metal-binding</keyword>
<keyword id="KW-0501">Molybdenum cofactor biosynthesis</keyword>
<keyword id="KW-0547">Nucleotide-binding</keyword>
<keyword id="KW-1185">Reference proteome</keyword>
<keyword id="KW-0949">S-adenosyl-L-methionine</keyword>
<reference key="1">
    <citation type="journal article" date="2003" name="Proc. Natl. Acad. Sci. U.S.A.">
        <title>The complete genome sequence of Mycobacterium bovis.</title>
        <authorList>
            <person name="Garnier T."/>
            <person name="Eiglmeier K."/>
            <person name="Camus J.-C."/>
            <person name="Medina N."/>
            <person name="Mansoor H."/>
            <person name="Pryor M."/>
            <person name="Duthoy S."/>
            <person name="Grondin S."/>
            <person name="Lacroix C."/>
            <person name="Monsempe C."/>
            <person name="Simon S."/>
            <person name="Harris B."/>
            <person name="Atkin R."/>
            <person name="Doggett J."/>
            <person name="Mayes R."/>
            <person name="Keating L."/>
            <person name="Wheeler P.R."/>
            <person name="Parkhill J."/>
            <person name="Barrell B.G."/>
            <person name="Cole S.T."/>
            <person name="Gordon S.V."/>
            <person name="Hewinson R.G."/>
        </authorList>
    </citation>
    <scope>NUCLEOTIDE SEQUENCE [LARGE SCALE GENOMIC DNA]</scope>
    <source>
        <strain>ATCC BAA-935 / AF2122/97</strain>
    </source>
</reference>
<reference key="2">
    <citation type="journal article" date="2017" name="Genome Announc.">
        <title>Updated reference genome sequence and annotation of Mycobacterium bovis AF2122/97.</title>
        <authorList>
            <person name="Malone K.M."/>
            <person name="Farrell D."/>
            <person name="Stuber T.P."/>
            <person name="Schubert O.T."/>
            <person name="Aebersold R."/>
            <person name="Robbe-Austerman S."/>
            <person name="Gordon S.V."/>
        </authorList>
    </citation>
    <scope>NUCLEOTIDE SEQUENCE [LARGE SCALE GENOMIC DNA]</scope>
    <scope>GENOME REANNOTATION</scope>
    <source>
        <strain>ATCC BAA-935 / AF2122/97</strain>
    </source>
</reference>
<accession>P65385</accession>
<accession>A0A1R3XWN6</accession>
<accession>O53881</accession>
<accession>X2BG27</accession>
<name>MOAA2_MYCBO</name>